<proteinExistence type="inferred from homology"/>
<gene>
    <name type="primary">MT-CYB</name>
    <name type="synonym">COB</name>
    <name type="synonym">CYTB</name>
    <name type="synonym">MTCYB</name>
</gene>
<organism>
    <name type="scientific">Sotalia fluviatilis</name>
    <name type="common">Gray dolphin</name>
    <name type="synonym">Tucuxi dolphin</name>
    <dbReference type="NCBI Taxonomy" id="103598"/>
    <lineage>
        <taxon>Eukaryota</taxon>
        <taxon>Metazoa</taxon>
        <taxon>Chordata</taxon>
        <taxon>Craniata</taxon>
        <taxon>Vertebrata</taxon>
        <taxon>Euteleostomi</taxon>
        <taxon>Mammalia</taxon>
        <taxon>Eutheria</taxon>
        <taxon>Laurasiatheria</taxon>
        <taxon>Artiodactyla</taxon>
        <taxon>Whippomorpha</taxon>
        <taxon>Cetacea</taxon>
        <taxon>Odontoceti</taxon>
        <taxon>Delphinidae</taxon>
        <taxon>Sotalia</taxon>
    </lineage>
</organism>
<name>CYB_SOTFL</name>
<accession>Q9TDK7</accession>
<geneLocation type="mitochondrion"/>
<keyword id="KW-0249">Electron transport</keyword>
<keyword id="KW-0349">Heme</keyword>
<keyword id="KW-0408">Iron</keyword>
<keyword id="KW-0472">Membrane</keyword>
<keyword id="KW-0479">Metal-binding</keyword>
<keyword id="KW-0496">Mitochondrion</keyword>
<keyword id="KW-0999">Mitochondrion inner membrane</keyword>
<keyword id="KW-0679">Respiratory chain</keyword>
<keyword id="KW-0812">Transmembrane</keyword>
<keyword id="KW-1133">Transmembrane helix</keyword>
<keyword id="KW-0813">Transport</keyword>
<keyword id="KW-0830">Ubiquinone</keyword>
<dbReference type="EMBL" id="AF084078">
    <property type="protein sequence ID" value="AAD54455.1"/>
    <property type="molecule type" value="Genomic_DNA"/>
</dbReference>
<dbReference type="EMBL" id="AF304067">
    <property type="protein sequence ID" value="AAG30910.1"/>
    <property type="molecule type" value="Genomic_DNA"/>
</dbReference>
<dbReference type="EMBL" id="DQ086828">
    <property type="protein sequence ID" value="AAZ78650.1"/>
    <property type="molecule type" value="Genomic_DNA"/>
</dbReference>
<dbReference type="SMR" id="Q9TDK7"/>
<dbReference type="GO" id="GO:0005743">
    <property type="term" value="C:mitochondrial inner membrane"/>
    <property type="evidence" value="ECO:0007669"/>
    <property type="project" value="UniProtKB-SubCell"/>
</dbReference>
<dbReference type="GO" id="GO:0045275">
    <property type="term" value="C:respiratory chain complex III"/>
    <property type="evidence" value="ECO:0007669"/>
    <property type="project" value="InterPro"/>
</dbReference>
<dbReference type="GO" id="GO:0046872">
    <property type="term" value="F:metal ion binding"/>
    <property type="evidence" value="ECO:0007669"/>
    <property type="project" value="UniProtKB-KW"/>
</dbReference>
<dbReference type="GO" id="GO:0008121">
    <property type="term" value="F:ubiquinol-cytochrome-c reductase activity"/>
    <property type="evidence" value="ECO:0007669"/>
    <property type="project" value="InterPro"/>
</dbReference>
<dbReference type="GO" id="GO:0006122">
    <property type="term" value="P:mitochondrial electron transport, ubiquinol to cytochrome c"/>
    <property type="evidence" value="ECO:0007669"/>
    <property type="project" value="TreeGrafter"/>
</dbReference>
<dbReference type="CDD" id="cd00290">
    <property type="entry name" value="cytochrome_b_C"/>
    <property type="match status" value="1"/>
</dbReference>
<dbReference type="CDD" id="cd00284">
    <property type="entry name" value="Cytochrome_b_N"/>
    <property type="match status" value="1"/>
</dbReference>
<dbReference type="FunFam" id="1.20.810.10:FF:000002">
    <property type="entry name" value="Cytochrome b"/>
    <property type="match status" value="1"/>
</dbReference>
<dbReference type="Gene3D" id="1.20.810.10">
    <property type="entry name" value="Cytochrome Bc1 Complex, Chain C"/>
    <property type="match status" value="1"/>
</dbReference>
<dbReference type="InterPro" id="IPR005798">
    <property type="entry name" value="Cyt_b/b6_C"/>
</dbReference>
<dbReference type="InterPro" id="IPR036150">
    <property type="entry name" value="Cyt_b/b6_C_sf"/>
</dbReference>
<dbReference type="InterPro" id="IPR005797">
    <property type="entry name" value="Cyt_b/b6_N"/>
</dbReference>
<dbReference type="InterPro" id="IPR027387">
    <property type="entry name" value="Cytb/b6-like_sf"/>
</dbReference>
<dbReference type="InterPro" id="IPR030689">
    <property type="entry name" value="Cytochrome_b"/>
</dbReference>
<dbReference type="InterPro" id="IPR048260">
    <property type="entry name" value="Cytochrome_b_C_euk/bac"/>
</dbReference>
<dbReference type="InterPro" id="IPR048259">
    <property type="entry name" value="Cytochrome_b_N_euk/bac"/>
</dbReference>
<dbReference type="InterPro" id="IPR016174">
    <property type="entry name" value="Di-haem_cyt_TM"/>
</dbReference>
<dbReference type="PANTHER" id="PTHR19271">
    <property type="entry name" value="CYTOCHROME B"/>
    <property type="match status" value="1"/>
</dbReference>
<dbReference type="PANTHER" id="PTHR19271:SF16">
    <property type="entry name" value="CYTOCHROME B"/>
    <property type="match status" value="1"/>
</dbReference>
<dbReference type="Pfam" id="PF00032">
    <property type="entry name" value="Cytochrom_B_C"/>
    <property type="match status" value="1"/>
</dbReference>
<dbReference type="Pfam" id="PF00033">
    <property type="entry name" value="Cytochrome_B"/>
    <property type="match status" value="1"/>
</dbReference>
<dbReference type="PIRSF" id="PIRSF038885">
    <property type="entry name" value="COB"/>
    <property type="match status" value="1"/>
</dbReference>
<dbReference type="SUPFAM" id="SSF81648">
    <property type="entry name" value="a domain/subunit of cytochrome bc1 complex (Ubiquinol-cytochrome c reductase)"/>
    <property type="match status" value="1"/>
</dbReference>
<dbReference type="SUPFAM" id="SSF81342">
    <property type="entry name" value="Transmembrane di-heme cytochromes"/>
    <property type="match status" value="1"/>
</dbReference>
<dbReference type="PROSITE" id="PS51003">
    <property type="entry name" value="CYTB_CTER"/>
    <property type="match status" value="1"/>
</dbReference>
<dbReference type="PROSITE" id="PS51002">
    <property type="entry name" value="CYTB_NTER"/>
    <property type="match status" value="1"/>
</dbReference>
<comment type="function">
    <text evidence="2">Component of the ubiquinol-cytochrome c reductase complex (complex III or cytochrome b-c1 complex) that is part of the mitochondrial respiratory chain. The b-c1 complex mediates electron transfer from ubiquinol to cytochrome c. Contributes to the generation of a proton gradient across the mitochondrial membrane that is then used for ATP synthesis.</text>
</comment>
<comment type="cofactor">
    <cofactor evidence="2">
        <name>heme b</name>
        <dbReference type="ChEBI" id="CHEBI:60344"/>
    </cofactor>
    <text evidence="2">Binds 2 heme b groups non-covalently.</text>
</comment>
<comment type="subunit">
    <text evidence="2">The cytochrome bc1 complex contains 11 subunits: 3 respiratory subunits (MT-CYB, CYC1 and UQCRFS1), 2 core proteins (UQCRC1 and UQCRC2) and 6 low-molecular weight proteins (UQCRH/QCR6, UQCRB/QCR7, UQCRQ/QCR8, UQCR10/QCR9, UQCR11/QCR10 and a cleavage product of UQCRFS1). This cytochrome bc1 complex then forms a dimer.</text>
</comment>
<comment type="subcellular location">
    <subcellularLocation>
        <location evidence="2">Mitochondrion inner membrane</location>
        <topology evidence="2">Multi-pass membrane protein</topology>
    </subcellularLocation>
</comment>
<comment type="miscellaneous">
    <text evidence="1">Heme 1 (or BL or b562) is low-potential and absorbs at about 562 nm, and heme 2 (or BH or b566) is high-potential and absorbs at about 566 nm.</text>
</comment>
<comment type="similarity">
    <text evidence="3 4">Belongs to the cytochrome b family.</text>
</comment>
<comment type="caution">
    <text evidence="2">The full-length protein contains only eight transmembrane helices, not nine as predicted by bioinformatics tools.</text>
</comment>
<evidence type="ECO:0000250" key="1"/>
<evidence type="ECO:0000250" key="2">
    <source>
        <dbReference type="UniProtKB" id="P00157"/>
    </source>
</evidence>
<evidence type="ECO:0000255" key="3">
    <source>
        <dbReference type="PROSITE-ProRule" id="PRU00967"/>
    </source>
</evidence>
<evidence type="ECO:0000255" key="4">
    <source>
        <dbReference type="PROSITE-ProRule" id="PRU00968"/>
    </source>
</evidence>
<feature type="chain" id="PRO_0000254761" description="Cytochrome b">
    <location>
        <begin position="1"/>
        <end position="379"/>
    </location>
</feature>
<feature type="transmembrane region" description="Helical" evidence="2">
    <location>
        <begin position="33"/>
        <end position="53"/>
    </location>
</feature>
<feature type="transmembrane region" description="Helical" evidence="2">
    <location>
        <begin position="77"/>
        <end position="98"/>
    </location>
</feature>
<feature type="transmembrane region" description="Helical" evidence="2">
    <location>
        <begin position="113"/>
        <end position="133"/>
    </location>
</feature>
<feature type="transmembrane region" description="Helical" evidence="2">
    <location>
        <begin position="178"/>
        <end position="198"/>
    </location>
</feature>
<feature type="transmembrane region" description="Helical" evidence="2">
    <location>
        <begin position="226"/>
        <end position="246"/>
    </location>
</feature>
<feature type="transmembrane region" description="Helical" evidence="2">
    <location>
        <begin position="288"/>
        <end position="308"/>
    </location>
</feature>
<feature type="transmembrane region" description="Helical" evidence="2">
    <location>
        <begin position="320"/>
        <end position="340"/>
    </location>
</feature>
<feature type="transmembrane region" description="Helical" evidence="2">
    <location>
        <begin position="347"/>
        <end position="367"/>
    </location>
</feature>
<feature type="binding site" description="axial binding residue" evidence="2">
    <location>
        <position position="83"/>
    </location>
    <ligand>
        <name>heme b</name>
        <dbReference type="ChEBI" id="CHEBI:60344"/>
        <label>b562</label>
    </ligand>
    <ligandPart>
        <name>Fe</name>
        <dbReference type="ChEBI" id="CHEBI:18248"/>
    </ligandPart>
</feature>
<feature type="binding site" description="axial binding residue" evidence="2">
    <location>
        <position position="97"/>
    </location>
    <ligand>
        <name>heme b</name>
        <dbReference type="ChEBI" id="CHEBI:60344"/>
        <label>b566</label>
    </ligand>
    <ligandPart>
        <name>Fe</name>
        <dbReference type="ChEBI" id="CHEBI:18248"/>
    </ligandPart>
</feature>
<feature type="binding site" description="axial binding residue" evidence="2">
    <location>
        <position position="182"/>
    </location>
    <ligand>
        <name>heme b</name>
        <dbReference type="ChEBI" id="CHEBI:60344"/>
        <label>b562</label>
    </ligand>
    <ligandPart>
        <name>Fe</name>
        <dbReference type="ChEBI" id="CHEBI:18248"/>
    </ligandPart>
</feature>
<feature type="binding site" description="axial binding residue" evidence="2">
    <location>
        <position position="196"/>
    </location>
    <ligand>
        <name>heme b</name>
        <dbReference type="ChEBI" id="CHEBI:60344"/>
        <label>b566</label>
    </ligand>
    <ligandPart>
        <name>Fe</name>
        <dbReference type="ChEBI" id="CHEBI:18248"/>
    </ligandPart>
</feature>
<feature type="binding site" evidence="2">
    <location>
        <position position="201"/>
    </location>
    <ligand>
        <name>a ubiquinone</name>
        <dbReference type="ChEBI" id="CHEBI:16389"/>
    </ligand>
</feature>
<protein>
    <recommendedName>
        <fullName>Cytochrome b</fullName>
    </recommendedName>
    <alternativeName>
        <fullName>Complex III subunit 3</fullName>
    </alternativeName>
    <alternativeName>
        <fullName>Complex III subunit III</fullName>
    </alternativeName>
    <alternativeName>
        <fullName>Cytochrome b-c1 complex subunit 3</fullName>
    </alternativeName>
    <alternativeName>
        <fullName>Ubiquinol-cytochrome-c reductase complex cytochrome b subunit</fullName>
    </alternativeName>
</protein>
<reference key="1">
    <citation type="journal article" date="1999" name="Mar. Mamm. Sci.">
        <title>Phylogenetic relationships among the delphinid cetaceans based on full cytochrome b sequences.</title>
        <authorList>
            <person name="LeDuc R.G."/>
            <person name="Perrin W.F."/>
            <person name="Dizon A.E."/>
        </authorList>
    </citation>
    <scope>NUCLEOTIDE SEQUENCE [GENOMIC DNA]</scope>
</reference>
<reference key="2">
    <citation type="journal article" date="2000" name="Proc. Natl. Acad. Sci. U.S.A.">
        <title>Independent adaptation to riverine habitats allowed survival of ancient cetacean lineages.</title>
        <authorList>
            <person name="Cassens I."/>
            <person name="Vicario S."/>
            <person name="Waddell V.G."/>
            <person name="Balchowsky H."/>
            <person name="Van Belle D."/>
            <person name="Ding W."/>
            <person name="Fan C."/>
            <person name="Mohan L."/>
            <person name="Simoes-Lopes P.C."/>
            <person name="Bastida R."/>
            <person name="Meyer A."/>
            <person name="Stanhope M.J."/>
            <person name="Milinkovitch M.C."/>
        </authorList>
    </citation>
    <scope>NUCLEOTIDE SEQUENCE [GENOMIC DNA]</scope>
</reference>
<reference key="3">
    <citation type="submission" date="2005-06" db="EMBL/GenBank/DDBJ databases">
        <title>Riverine and marine ecotypes of Sotalia dolphins are different species.</title>
        <authorList>
            <person name="Cunha H.A."/>
            <person name="Sole-Cava A.M."/>
        </authorList>
    </citation>
    <scope>NUCLEOTIDE SEQUENCE [GENOMIC DNA]</scope>
</reference>
<sequence>MTNIRKTHPLMKILNNAFIDLPTPSSISSWWNFGSLLGLCLIMQILTGLFLAMHYTPDTSTAFSSVAHICRDVNYGWFIRYLHANGASMFFICLYAHIGRGLYYGSYMFQETWNIGVLLLLTVMATAFVGYVLPWGQMSFWGATVITNLLSAIPYIGTTLVEWIWGGFSVDKATLTRFFAFHFILPFIITALAAVHLLFLHETGSNNPTGIPSNMDMIPFHPYYTIKDILGALLLILTLLALTLFTPDLLGDPDNYTPANPLNTPAHIKPEWYFLFAYAILRSIPNKLGGVLALLLSILILIFIPMLQTSKQRSMMFRPFSQLLFWTLIADLLTLTWIGAQPVEHPYIIVGQLASILYFLLILVLMPMVGLIENKLLKW</sequence>